<comment type="function">
    <text evidence="1">Cleaves peptides in various proteins in a process that requires ATP hydrolysis. Has a chymotrypsin-like activity. Plays a major role in the degradation of misfolded proteins.</text>
</comment>
<comment type="catalytic activity">
    <reaction evidence="1">
        <text>Hydrolysis of proteins to small peptides in the presence of ATP and magnesium. alpha-casein is the usual test substrate. In the absence of ATP, only oligopeptides shorter than five residues are hydrolyzed (such as succinyl-Leu-Tyr-|-NHMec, and Leu-Tyr-Leu-|-Tyr-Trp, in which cleavage of the -Tyr-|-Leu- and -Tyr-|-Trp bonds also occurs).</text>
        <dbReference type="EC" id="3.4.21.92"/>
    </reaction>
</comment>
<comment type="subunit">
    <text evidence="1">Fourteen ClpP subunits assemble into 2 heptameric rings which stack back to back to give a disk-like structure with a central cavity, resembling the structure of eukaryotic proteasomes.</text>
</comment>
<comment type="subcellular location">
    <subcellularLocation>
        <location evidence="1">Cytoplasm</location>
    </subcellularLocation>
</comment>
<comment type="similarity">
    <text evidence="1">Belongs to the peptidase S14 family.</text>
</comment>
<name>CLPP_PSEA6</name>
<proteinExistence type="inferred from homology"/>
<dbReference type="EC" id="3.4.21.92" evidence="1"/>
<dbReference type="EMBL" id="CP000388">
    <property type="protein sequence ID" value="ABG41642.1"/>
    <property type="molecule type" value="Genomic_DNA"/>
</dbReference>
<dbReference type="RefSeq" id="WP_006993119.1">
    <property type="nucleotide sequence ID" value="NC_008228.1"/>
</dbReference>
<dbReference type="SMR" id="Q15R46"/>
<dbReference type="STRING" id="342610.Patl_3136"/>
<dbReference type="MEROPS" id="S14.001"/>
<dbReference type="KEGG" id="pat:Patl_3136"/>
<dbReference type="eggNOG" id="COG0740">
    <property type="taxonomic scope" value="Bacteria"/>
</dbReference>
<dbReference type="HOGENOM" id="CLU_058707_3_3_6"/>
<dbReference type="OrthoDB" id="9802800at2"/>
<dbReference type="Proteomes" id="UP000001981">
    <property type="component" value="Chromosome"/>
</dbReference>
<dbReference type="GO" id="GO:0005737">
    <property type="term" value="C:cytoplasm"/>
    <property type="evidence" value="ECO:0007669"/>
    <property type="project" value="UniProtKB-SubCell"/>
</dbReference>
<dbReference type="GO" id="GO:0009368">
    <property type="term" value="C:endopeptidase Clp complex"/>
    <property type="evidence" value="ECO:0007669"/>
    <property type="project" value="TreeGrafter"/>
</dbReference>
<dbReference type="GO" id="GO:0004176">
    <property type="term" value="F:ATP-dependent peptidase activity"/>
    <property type="evidence" value="ECO:0007669"/>
    <property type="project" value="InterPro"/>
</dbReference>
<dbReference type="GO" id="GO:0051117">
    <property type="term" value="F:ATPase binding"/>
    <property type="evidence" value="ECO:0007669"/>
    <property type="project" value="TreeGrafter"/>
</dbReference>
<dbReference type="GO" id="GO:0004252">
    <property type="term" value="F:serine-type endopeptidase activity"/>
    <property type="evidence" value="ECO:0007669"/>
    <property type="project" value="UniProtKB-UniRule"/>
</dbReference>
<dbReference type="GO" id="GO:0006515">
    <property type="term" value="P:protein quality control for misfolded or incompletely synthesized proteins"/>
    <property type="evidence" value="ECO:0007669"/>
    <property type="project" value="TreeGrafter"/>
</dbReference>
<dbReference type="CDD" id="cd07017">
    <property type="entry name" value="S14_ClpP_2"/>
    <property type="match status" value="1"/>
</dbReference>
<dbReference type="FunFam" id="3.90.226.10:FF:000001">
    <property type="entry name" value="ATP-dependent Clp protease proteolytic subunit"/>
    <property type="match status" value="1"/>
</dbReference>
<dbReference type="Gene3D" id="3.90.226.10">
    <property type="entry name" value="2-enoyl-CoA Hydratase, Chain A, domain 1"/>
    <property type="match status" value="1"/>
</dbReference>
<dbReference type="HAMAP" id="MF_00444">
    <property type="entry name" value="ClpP"/>
    <property type="match status" value="1"/>
</dbReference>
<dbReference type="InterPro" id="IPR001907">
    <property type="entry name" value="ClpP"/>
</dbReference>
<dbReference type="InterPro" id="IPR029045">
    <property type="entry name" value="ClpP/crotonase-like_dom_sf"/>
</dbReference>
<dbReference type="InterPro" id="IPR023562">
    <property type="entry name" value="ClpP/TepA"/>
</dbReference>
<dbReference type="InterPro" id="IPR033135">
    <property type="entry name" value="ClpP_His_AS"/>
</dbReference>
<dbReference type="InterPro" id="IPR018215">
    <property type="entry name" value="ClpP_Ser_AS"/>
</dbReference>
<dbReference type="NCBIfam" id="TIGR00493">
    <property type="entry name" value="clpP"/>
    <property type="match status" value="1"/>
</dbReference>
<dbReference type="NCBIfam" id="NF001368">
    <property type="entry name" value="PRK00277.1"/>
    <property type="match status" value="1"/>
</dbReference>
<dbReference type="NCBIfam" id="NF009205">
    <property type="entry name" value="PRK12553.1"/>
    <property type="match status" value="1"/>
</dbReference>
<dbReference type="PANTHER" id="PTHR10381">
    <property type="entry name" value="ATP-DEPENDENT CLP PROTEASE PROTEOLYTIC SUBUNIT"/>
    <property type="match status" value="1"/>
</dbReference>
<dbReference type="PANTHER" id="PTHR10381:SF70">
    <property type="entry name" value="ATP-DEPENDENT CLP PROTEASE PROTEOLYTIC SUBUNIT"/>
    <property type="match status" value="1"/>
</dbReference>
<dbReference type="Pfam" id="PF00574">
    <property type="entry name" value="CLP_protease"/>
    <property type="match status" value="1"/>
</dbReference>
<dbReference type="PRINTS" id="PR00127">
    <property type="entry name" value="CLPPROTEASEP"/>
</dbReference>
<dbReference type="SUPFAM" id="SSF52096">
    <property type="entry name" value="ClpP/crotonase"/>
    <property type="match status" value="1"/>
</dbReference>
<dbReference type="PROSITE" id="PS00382">
    <property type="entry name" value="CLP_PROTEASE_HIS"/>
    <property type="match status" value="1"/>
</dbReference>
<dbReference type="PROSITE" id="PS00381">
    <property type="entry name" value="CLP_PROTEASE_SER"/>
    <property type="match status" value="1"/>
</dbReference>
<reference key="1">
    <citation type="submission" date="2006-06" db="EMBL/GenBank/DDBJ databases">
        <title>Complete sequence of Pseudoalteromonas atlantica T6c.</title>
        <authorList>
            <consortium name="US DOE Joint Genome Institute"/>
            <person name="Copeland A."/>
            <person name="Lucas S."/>
            <person name="Lapidus A."/>
            <person name="Barry K."/>
            <person name="Detter J.C."/>
            <person name="Glavina del Rio T."/>
            <person name="Hammon N."/>
            <person name="Israni S."/>
            <person name="Dalin E."/>
            <person name="Tice H."/>
            <person name="Pitluck S."/>
            <person name="Saunders E."/>
            <person name="Brettin T."/>
            <person name="Bruce D."/>
            <person name="Han C."/>
            <person name="Tapia R."/>
            <person name="Gilna P."/>
            <person name="Schmutz J."/>
            <person name="Larimer F."/>
            <person name="Land M."/>
            <person name="Hauser L."/>
            <person name="Kyrpides N."/>
            <person name="Kim E."/>
            <person name="Karls A.C."/>
            <person name="Bartlett D."/>
            <person name="Higgins B.P."/>
            <person name="Richardson P."/>
        </authorList>
    </citation>
    <scope>NUCLEOTIDE SEQUENCE [LARGE SCALE GENOMIC DNA]</scope>
    <source>
        <strain>T6c / ATCC BAA-1087</strain>
    </source>
</reference>
<keyword id="KW-0963">Cytoplasm</keyword>
<keyword id="KW-0378">Hydrolase</keyword>
<keyword id="KW-0645">Protease</keyword>
<keyword id="KW-0720">Serine protease</keyword>
<protein>
    <recommendedName>
        <fullName evidence="1">ATP-dependent Clp protease proteolytic subunit</fullName>
        <ecNumber evidence="1">3.4.21.92</ecNumber>
    </recommendedName>
    <alternativeName>
        <fullName evidence="1">Endopeptidase Clp</fullName>
    </alternativeName>
</protein>
<evidence type="ECO:0000255" key="1">
    <source>
        <dbReference type="HAMAP-Rule" id="MF_00444"/>
    </source>
</evidence>
<accession>Q15R46</accession>
<sequence length="212" mass="23333">MMNTPFDPTNALVPMVVEQTAKGERSYDIYSRLLKENVIFMVGQVEDHMANLIVAQMLFLEAENPEKDIFLYINSPGGSVTAGMAIYDTMNFIKPDVSTVCIGQAASMGAFLLSGGAKGKRYCLPNARVMIHQPLGGFQGQASDFEIHAKEILSIKEKMNRLMAAHTGQDYDKVARDTDRDNFLSAQESVDYGLVDQVLANRPDASNSDAKK</sequence>
<organism>
    <name type="scientific">Pseudoalteromonas atlantica (strain T6c / ATCC BAA-1087)</name>
    <dbReference type="NCBI Taxonomy" id="3042615"/>
    <lineage>
        <taxon>Bacteria</taxon>
        <taxon>Pseudomonadati</taxon>
        <taxon>Pseudomonadota</taxon>
        <taxon>Gammaproteobacteria</taxon>
        <taxon>Alteromonadales</taxon>
        <taxon>Alteromonadaceae</taxon>
        <taxon>Paraglaciecola</taxon>
    </lineage>
</organism>
<gene>
    <name evidence="1" type="primary">clpP</name>
    <name type="ordered locus">Patl_3136</name>
</gene>
<feature type="chain" id="PRO_1000026112" description="ATP-dependent Clp protease proteolytic subunit">
    <location>
        <begin position="1"/>
        <end position="212"/>
    </location>
</feature>
<feature type="active site" description="Nucleophile" evidence="1">
    <location>
        <position position="107"/>
    </location>
</feature>
<feature type="active site" evidence="1">
    <location>
        <position position="132"/>
    </location>
</feature>